<proteinExistence type="inferred from homology"/>
<accession>Q1JMD6</accession>
<comment type="function">
    <text evidence="1">This protein binds to 23S rRNA in the presence of protein L20.</text>
</comment>
<comment type="subunit">
    <text evidence="1">Part of the 50S ribosomal subunit. Contacts protein L20.</text>
</comment>
<comment type="similarity">
    <text evidence="1">Belongs to the bacterial ribosomal protein bL21 family.</text>
</comment>
<sequence>MSTYAIIKTGGKQVKVEVGQAIYVEKIDAEAGAEVTFNEVVLVGGDKTVVGTPVVEGATVVGTVEKQGKQKKVVTFKYKPKKGSHRKQGHRQPYTKVVINAINA</sequence>
<keyword id="KW-0687">Ribonucleoprotein</keyword>
<keyword id="KW-0689">Ribosomal protein</keyword>
<keyword id="KW-0694">RNA-binding</keyword>
<keyword id="KW-0699">rRNA-binding</keyword>
<dbReference type="EMBL" id="CP000259">
    <property type="protein sequence ID" value="ABF31876.1"/>
    <property type="molecule type" value="Genomic_DNA"/>
</dbReference>
<dbReference type="RefSeq" id="WP_002985116.1">
    <property type="nucleotide sequence ID" value="NC_008021.1"/>
</dbReference>
<dbReference type="SMR" id="Q1JMD6"/>
<dbReference type="GeneID" id="83690429"/>
<dbReference type="KEGG" id="spk:MGAS9429_Spy0688"/>
<dbReference type="HOGENOM" id="CLU_061463_3_1_9"/>
<dbReference type="Proteomes" id="UP000002433">
    <property type="component" value="Chromosome"/>
</dbReference>
<dbReference type="GO" id="GO:0005737">
    <property type="term" value="C:cytoplasm"/>
    <property type="evidence" value="ECO:0007669"/>
    <property type="project" value="UniProtKB-ARBA"/>
</dbReference>
<dbReference type="GO" id="GO:1990904">
    <property type="term" value="C:ribonucleoprotein complex"/>
    <property type="evidence" value="ECO:0007669"/>
    <property type="project" value="UniProtKB-KW"/>
</dbReference>
<dbReference type="GO" id="GO:0005840">
    <property type="term" value="C:ribosome"/>
    <property type="evidence" value="ECO:0007669"/>
    <property type="project" value="UniProtKB-KW"/>
</dbReference>
<dbReference type="GO" id="GO:0019843">
    <property type="term" value="F:rRNA binding"/>
    <property type="evidence" value="ECO:0007669"/>
    <property type="project" value="UniProtKB-UniRule"/>
</dbReference>
<dbReference type="GO" id="GO:0003735">
    <property type="term" value="F:structural constituent of ribosome"/>
    <property type="evidence" value="ECO:0007669"/>
    <property type="project" value="InterPro"/>
</dbReference>
<dbReference type="GO" id="GO:0006412">
    <property type="term" value="P:translation"/>
    <property type="evidence" value="ECO:0007669"/>
    <property type="project" value="UniProtKB-UniRule"/>
</dbReference>
<dbReference type="HAMAP" id="MF_01363">
    <property type="entry name" value="Ribosomal_bL21"/>
    <property type="match status" value="1"/>
</dbReference>
<dbReference type="InterPro" id="IPR028909">
    <property type="entry name" value="bL21-like"/>
</dbReference>
<dbReference type="InterPro" id="IPR036164">
    <property type="entry name" value="bL21-like_sf"/>
</dbReference>
<dbReference type="InterPro" id="IPR001787">
    <property type="entry name" value="Ribosomal_bL21"/>
</dbReference>
<dbReference type="InterPro" id="IPR018258">
    <property type="entry name" value="Ribosomal_bL21_CS"/>
</dbReference>
<dbReference type="NCBIfam" id="TIGR00061">
    <property type="entry name" value="L21"/>
    <property type="match status" value="1"/>
</dbReference>
<dbReference type="PANTHER" id="PTHR21349">
    <property type="entry name" value="50S RIBOSOMAL PROTEIN L21"/>
    <property type="match status" value="1"/>
</dbReference>
<dbReference type="PANTHER" id="PTHR21349:SF0">
    <property type="entry name" value="LARGE RIBOSOMAL SUBUNIT PROTEIN BL21M"/>
    <property type="match status" value="1"/>
</dbReference>
<dbReference type="Pfam" id="PF00829">
    <property type="entry name" value="Ribosomal_L21p"/>
    <property type="match status" value="1"/>
</dbReference>
<dbReference type="SUPFAM" id="SSF141091">
    <property type="entry name" value="L21p-like"/>
    <property type="match status" value="1"/>
</dbReference>
<dbReference type="PROSITE" id="PS01169">
    <property type="entry name" value="RIBOSOMAL_L21"/>
    <property type="match status" value="1"/>
</dbReference>
<protein>
    <recommendedName>
        <fullName evidence="1">Large ribosomal subunit protein bL21</fullName>
    </recommendedName>
    <alternativeName>
        <fullName evidence="2">50S ribosomal protein L21</fullName>
    </alternativeName>
</protein>
<organism>
    <name type="scientific">Streptococcus pyogenes serotype M12 (strain MGAS9429)</name>
    <dbReference type="NCBI Taxonomy" id="370551"/>
    <lineage>
        <taxon>Bacteria</taxon>
        <taxon>Bacillati</taxon>
        <taxon>Bacillota</taxon>
        <taxon>Bacilli</taxon>
        <taxon>Lactobacillales</taxon>
        <taxon>Streptococcaceae</taxon>
        <taxon>Streptococcus</taxon>
    </lineage>
</organism>
<gene>
    <name evidence="1" type="primary">rplU</name>
    <name type="ordered locus">MGAS9429_Spy0688</name>
</gene>
<name>RL21_STRPC</name>
<evidence type="ECO:0000255" key="1">
    <source>
        <dbReference type="HAMAP-Rule" id="MF_01363"/>
    </source>
</evidence>
<evidence type="ECO:0000305" key="2"/>
<feature type="chain" id="PRO_0000269395" description="Large ribosomal subunit protein bL21">
    <location>
        <begin position="1"/>
        <end position="104"/>
    </location>
</feature>
<reference key="1">
    <citation type="journal article" date="2006" name="Proc. Natl. Acad. Sci. U.S.A.">
        <title>Molecular genetic anatomy of inter- and intraserotype variation in the human bacterial pathogen group A Streptococcus.</title>
        <authorList>
            <person name="Beres S.B."/>
            <person name="Richter E.W."/>
            <person name="Nagiec M.J."/>
            <person name="Sumby P."/>
            <person name="Porcella S.F."/>
            <person name="DeLeo F.R."/>
            <person name="Musser J.M."/>
        </authorList>
    </citation>
    <scope>NUCLEOTIDE SEQUENCE [LARGE SCALE GENOMIC DNA]</scope>
    <source>
        <strain>MGAS9429</strain>
    </source>
</reference>